<gene>
    <name evidence="2" type="primary">cysN</name>
    <name type="ordered locus">Mchl_2508</name>
</gene>
<keyword id="KW-0067">ATP-binding</keyword>
<keyword id="KW-0342">GTP-binding</keyword>
<keyword id="KW-0547">Nucleotide-binding</keyword>
<keyword id="KW-0548">Nucleotidyltransferase</keyword>
<keyword id="KW-0808">Transferase</keyword>
<evidence type="ECO:0000250" key="1"/>
<evidence type="ECO:0000255" key="2">
    <source>
        <dbReference type="HAMAP-Rule" id="MF_00062"/>
    </source>
</evidence>
<organism>
    <name type="scientific">Methylorubrum extorquens (strain CM4 / NCIMB 13688)</name>
    <name type="common">Methylobacterium extorquens</name>
    <dbReference type="NCBI Taxonomy" id="440085"/>
    <lineage>
        <taxon>Bacteria</taxon>
        <taxon>Pseudomonadati</taxon>
        <taxon>Pseudomonadota</taxon>
        <taxon>Alphaproteobacteria</taxon>
        <taxon>Hyphomicrobiales</taxon>
        <taxon>Methylobacteriaceae</taxon>
        <taxon>Methylorubrum</taxon>
    </lineage>
</organism>
<reference key="1">
    <citation type="submission" date="2008-12" db="EMBL/GenBank/DDBJ databases">
        <title>Complete sequence of chromosome of Methylobacterium chloromethanicum CM4.</title>
        <authorList>
            <consortium name="US DOE Joint Genome Institute"/>
            <person name="Lucas S."/>
            <person name="Copeland A."/>
            <person name="Lapidus A."/>
            <person name="Glavina del Rio T."/>
            <person name="Dalin E."/>
            <person name="Tice H."/>
            <person name="Bruce D."/>
            <person name="Goodwin L."/>
            <person name="Pitluck S."/>
            <person name="Chertkov O."/>
            <person name="Brettin T."/>
            <person name="Detter J.C."/>
            <person name="Han C."/>
            <person name="Larimer F."/>
            <person name="Land M."/>
            <person name="Hauser L."/>
            <person name="Kyrpides N."/>
            <person name="Mikhailova N."/>
            <person name="Marx C."/>
            <person name="Richardson P."/>
        </authorList>
    </citation>
    <scope>NUCLEOTIDE SEQUENCE [LARGE SCALE GENOMIC DNA]</scope>
    <source>
        <strain>CM4 / NCIMB 13688</strain>
    </source>
</reference>
<comment type="function">
    <text evidence="2">With CysD forms the ATP sulfurylase (ATPS) that catalyzes the adenylation of sulfate producing adenosine 5'-phosphosulfate (APS) and diphosphate, the first enzymatic step in sulfur assimilation pathway. APS synthesis involves the formation of a high-energy phosphoric-sulfuric acid anhydride bond driven by GTP hydrolysis by CysN coupled to ATP hydrolysis by CysD.</text>
</comment>
<comment type="catalytic activity">
    <reaction evidence="2">
        <text>sulfate + ATP + H(+) = adenosine 5'-phosphosulfate + diphosphate</text>
        <dbReference type="Rhea" id="RHEA:18133"/>
        <dbReference type="ChEBI" id="CHEBI:15378"/>
        <dbReference type="ChEBI" id="CHEBI:16189"/>
        <dbReference type="ChEBI" id="CHEBI:30616"/>
        <dbReference type="ChEBI" id="CHEBI:33019"/>
        <dbReference type="ChEBI" id="CHEBI:58243"/>
        <dbReference type="EC" id="2.7.7.4"/>
    </reaction>
</comment>
<comment type="pathway">
    <text evidence="2">Sulfur metabolism; hydrogen sulfide biosynthesis; sulfite from sulfate: step 1/3.</text>
</comment>
<comment type="subunit">
    <text evidence="2">Heterodimer composed of CysD, the smaller subunit, and CysN.</text>
</comment>
<comment type="similarity">
    <text evidence="2">Belongs to the TRAFAC class translation factor GTPase superfamily. Classic translation factor GTPase family. CysN/NodQ subfamily.</text>
</comment>
<dbReference type="EC" id="2.7.7.4" evidence="2"/>
<dbReference type="EMBL" id="CP001298">
    <property type="protein sequence ID" value="ACK83350.1"/>
    <property type="molecule type" value="Genomic_DNA"/>
</dbReference>
<dbReference type="RefSeq" id="WP_015950909.1">
    <property type="nucleotide sequence ID" value="NC_011757.1"/>
</dbReference>
<dbReference type="SMR" id="B7L0X9"/>
<dbReference type="KEGG" id="mch:Mchl_2508"/>
<dbReference type="HOGENOM" id="CLU_007265_5_2_5"/>
<dbReference type="UniPathway" id="UPA00140">
    <property type="reaction ID" value="UER00204"/>
</dbReference>
<dbReference type="Proteomes" id="UP000002385">
    <property type="component" value="Chromosome"/>
</dbReference>
<dbReference type="GO" id="GO:0005524">
    <property type="term" value="F:ATP binding"/>
    <property type="evidence" value="ECO:0007669"/>
    <property type="project" value="UniProtKB-KW"/>
</dbReference>
<dbReference type="GO" id="GO:0005525">
    <property type="term" value="F:GTP binding"/>
    <property type="evidence" value="ECO:0007669"/>
    <property type="project" value="UniProtKB-UniRule"/>
</dbReference>
<dbReference type="GO" id="GO:0003924">
    <property type="term" value="F:GTPase activity"/>
    <property type="evidence" value="ECO:0007669"/>
    <property type="project" value="InterPro"/>
</dbReference>
<dbReference type="GO" id="GO:0004781">
    <property type="term" value="F:sulfate adenylyltransferase (ATP) activity"/>
    <property type="evidence" value="ECO:0007669"/>
    <property type="project" value="UniProtKB-UniRule"/>
</dbReference>
<dbReference type="GO" id="GO:0070814">
    <property type="term" value="P:hydrogen sulfide biosynthetic process"/>
    <property type="evidence" value="ECO:0007669"/>
    <property type="project" value="UniProtKB-UniRule"/>
</dbReference>
<dbReference type="GO" id="GO:0000103">
    <property type="term" value="P:sulfate assimilation"/>
    <property type="evidence" value="ECO:0007669"/>
    <property type="project" value="UniProtKB-UniRule"/>
</dbReference>
<dbReference type="CDD" id="cd04166">
    <property type="entry name" value="CysN_ATPS"/>
    <property type="match status" value="1"/>
</dbReference>
<dbReference type="CDD" id="cd03695">
    <property type="entry name" value="CysN_NodQ_II"/>
    <property type="match status" value="1"/>
</dbReference>
<dbReference type="CDD" id="cd04095">
    <property type="entry name" value="CysN_NoDQ_III"/>
    <property type="match status" value="1"/>
</dbReference>
<dbReference type="FunFam" id="3.40.50.300:FF:000119">
    <property type="entry name" value="Sulfate adenylyltransferase subunit 1"/>
    <property type="match status" value="1"/>
</dbReference>
<dbReference type="Gene3D" id="3.40.50.300">
    <property type="entry name" value="P-loop containing nucleotide triphosphate hydrolases"/>
    <property type="match status" value="1"/>
</dbReference>
<dbReference type="Gene3D" id="2.40.30.10">
    <property type="entry name" value="Translation factors"/>
    <property type="match status" value="2"/>
</dbReference>
<dbReference type="HAMAP" id="MF_00062">
    <property type="entry name" value="Sulf_adenylyltr_sub1"/>
    <property type="match status" value="1"/>
</dbReference>
<dbReference type="InterPro" id="IPR041757">
    <property type="entry name" value="CysN_GTP-bd"/>
</dbReference>
<dbReference type="InterPro" id="IPR044138">
    <property type="entry name" value="CysN_II"/>
</dbReference>
<dbReference type="InterPro" id="IPR044139">
    <property type="entry name" value="CysN_NoDQ_III"/>
</dbReference>
<dbReference type="InterPro" id="IPR031157">
    <property type="entry name" value="G_TR_CS"/>
</dbReference>
<dbReference type="InterPro" id="IPR054696">
    <property type="entry name" value="GTP-eEF1A_C"/>
</dbReference>
<dbReference type="InterPro" id="IPR027417">
    <property type="entry name" value="P-loop_NTPase"/>
</dbReference>
<dbReference type="InterPro" id="IPR011779">
    <property type="entry name" value="SO4_adenylTrfase_lsu"/>
</dbReference>
<dbReference type="InterPro" id="IPR000795">
    <property type="entry name" value="T_Tr_GTP-bd_dom"/>
</dbReference>
<dbReference type="InterPro" id="IPR050100">
    <property type="entry name" value="TRAFAC_GTPase_members"/>
</dbReference>
<dbReference type="InterPro" id="IPR009000">
    <property type="entry name" value="Transl_B-barrel_sf"/>
</dbReference>
<dbReference type="InterPro" id="IPR009001">
    <property type="entry name" value="Transl_elong_EF1A/Init_IF2_C"/>
</dbReference>
<dbReference type="NCBIfam" id="TIGR02034">
    <property type="entry name" value="CysN"/>
    <property type="match status" value="1"/>
</dbReference>
<dbReference type="NCBIfam" id="NF003478">
    <property type="entry name" value="PRK05124.1"/>
    <property type="match status" value="1"/>
</dbReference>
<dbReference type="PANTHER" id="PTHR23115">
    <property type="entry name" value="TRANSLATION FACTOR"/>
    <property type="match status" value="1"/>
</dbReference>
<dbReference type="Pfam" id="PF22594">
    <property type="entry name" value="GTP-eEF1A_C"/>
    <property type="match status" value="1"/>
</dbReference>
<dbReference type="Pfam" id="PF00009">
    <property type="entry name" value="GTP_EFTU"/>
    <property type="match status" value="1"/>
</dbReference>
<dbReference type="PRINTS" id="PR00315">
    <property type="entry name" value="ELONGATNFCT"/>
</dbReference>
<dbReference type="SUPFAM" id="SSF50465">
    <property type="entry name" value="EF-Tu/eEF-1alpha/eIF2-gamma C-terminal domain"/>
    <property type="match status" value="1"/>
</dbReference>
<dbReference type="SUPFAM" id="SSF52540">
    <property type="entry name" value="P-loop containing nucleoside triphosphate hydrolases"/>
    <property type="match status" value="1"/>
</dbReference>
<dbReference type="SUPFAM" id="SSF50447">
    <property type="entry name" value="Translation proteins"/>
    <property type="match status" value="1"/>
</dbReference>
<dbReference type="PROSITE" id="PS00301">
    <property type="entry name" value="G_TR_1"/>
    <property type="match status" value="1"/>
</dbReference>
<dbReference type="PROSITE" id="PS51722">
    <property type="entry name" value="G_TR_2"/>
    <property type="match status" value="1"/>
</dbReference>
<feature type="chain" id="PRO_1000117916" description="Sulfate adenylyltransferase subunit 1">
    <location>
        <begin position="1"/>
        <end position="469"/>
    </location>
</feature>
<feature type="domain" description="tr-type G">
    <location>
        <begin position="22"/>
        <end position="237"/>
    </location>
</feature>
<feature type="region of interest" description="G1" evidence="1">
    <location>
        <begin position="31"/>
        <end position="38"/>
    </location>
</feature>
<feature type="region of interest" description="G2" evidence="1">
    <location>
        <begin position="89"/>
        <end position="93"/>
    </location>
</feature>
<feature type="region of interest" description="G3" evidence="1">
    <location>
        <begin position="110"/>
        <end position="113"/>
    </location>
</feature>
<feature type="region of interest" description="G4" evidence="1">
    <location>
        <begin position="165"/>
        <end position="168"/>
    </location>
</feature>
<feature type="region of interest" description="G5" evidence="1">
    <location>
        <begin position="202"/>
        <end position="204"/>
    </location>
</feature>
<feature type="binding site" evidence="2">
    <location>
        <begin position="31"/>
        <end position="38"/>
    </location>
    <ligand>
        <name>GTP</name>
        <dbReference type="ChEBI" id="CHEBI:37565"/>
    </ligand>
</feature>
<feature type="binding site" evidence="2">
    <location>
        <begin position="110"/>
        <end position="114"/>
    </location>
    <ligand>
        <name>GTP</name>
        <dbReference type="ChEBI" id="CHEBI:37565"/>
    </ligand>
</feature>
<feature type="binding site" evidence="2">
    <location>
        <begin position="165"/>
        <end position="168"/>
    </location>
    <ligand>
        <name>GTP</name>
        <dbReference type="ChEBI" id="CHEBI:37565"/>
    </ligand>
</feature>
<sequence length="469" mass="50231">MTIHQSPEAFGYDAFLRQHQNKEVLRFITCGSVDDGKSTLIGRLLHDTKQIFDDQVTALQRDSRKHGTQGGEVDFALLVDGLQAEREQGITIDVAYRFFSTDRRSFIVADTPGHEQYTRNMATGASTADLAVILVDARHGLTRQSRRHALLVSLLGIRRVALAINKMDLVGWSQDKFEAIVSGFQAFAAPLNFTEVRAIPLSAKNGDNVVLPGTAATWYTDVPLLRYLEEVPVKSEERAAAFRMPVQWVNRPNSDFRGFSGLIASGSVAPGDAVTVAPSGKTSTIARIFTADGDLERASEGQSVTLVLADEVDASRGAVIATSDAPLTLTDSLDVRLFWAAESDLVPGANLWAKVGTQTVNAVVKAVHRRIDPETGQAGPADKLAVNDIGDVTLTLDRQIAVDPYAENRDTGSLILIDRETTDTAALGLVQTIVASSKVAPAPTASVTASAEPARSGGLLAGLKRLFGG</sequence>
<proteinExistence type="inferred from homology"/>
<name>CYSN_METC4</name>
<protein>
    <recommendedName>
        <fullName evidence="2">Sulfate adenylyltransferase subunit 1</fullName>
        <ecNumber evidence="2">2.7.7.4</ecNumber>
    </recommendedName>
    <alternativeName>
        <fullName evidence="2">ATP-sulfurylase large subunit</fullName>
    </alternativeName>
    <alternativeName>
        <fullName evidence="2">Sulfate adenylate transferase</fullName>
        <shortName evidence="2">SAT</shortName>
    </alternativeName>
</protein>
<accession>B7L0X9</accession>